<accession>P33573</accession>
<sequence>MTLRGVSMVLTWCLLVSKAWSSGDDSSIDIRGPRLVMPSQARDSCSTQQTTELCVEGNWGRKCPGGCRMLSMLSRTEKDSMRRVDELTKRLARMIQLHTEIHSYYRSVSDVSNQVVTDREDTEARFYALLSDLERKIIYLQRRINGQLTLLSQLRNGIAQQTSTILQLEVDTDVALRTCKGACARQVRYRVDKEMNLQLEKANAYLSGINLALFEEIVHESFSVERDDARSLHPYSGGPASDSEPRDGDGTASQATGFRSDATDPGVSHGNSSKSFGNVDERSKVEKDVNVASTSSVSSSSSSSSSSSSTSSTISSTQKTEELSFKKVSVSTAAVAGKDTDDFQWDSVQTASQTEEGFVRDTGADSTWNQHNVQWNSDFGTASDDEPDFQARSHRTNLSEYIDCLDVLQRRPGGKASGLYEVRPRGAKRALTVHCEQDTDGGGWTLVQQREDGSLNFNRSFSAYREGFGTVDGSGHGELWLGLEAMYLLAHEDSTMRVELQGWDGAGAHAEYTVTLRDDSKGYALQVSDYRGTAGNALVSGVADDPELTSHGGMTFSTYDRDTDKWSDGSCAEWYGGGWWINACQAANLNGVYYQGGPYDPREKPPYEVENGVVWATYRGSDYSLKRTAVRFRRVQIPIVE</sequence>
<comment type="function">
    <text>Fibrinogen has a double function: yielding monomers that polymerize into fibrin and acting as a cofactor in platelet aggregation.</text>
</comment>
<comment type="subunit">
    <text evidence="2">Heterohexamer; disulfide linked. Contains 2 sets of 3 non-identical chains (alpha, beta and gamma). The 2 heterotrimers are in head to head conformation with the N-termini in a small central domain (By similarity).</text>
</comment>
<comment type="subcellular location">
    <subcellularLocation>
        <location evidence="2">Secreted</location>
    </subcellularLocation>
</comment>
<comment type="domain">
    <text evidence="2">A long coiled coil structure formed by 3 polypeptide chains connects the central nodule to the C-terminal domains (distal nodules). The long C-terminal ends of the alpha chains fold back, contributing a fourth strand to the coiled coil structure.</text>
</comment>
<comment type="PTM">
    <text>Conversion of fibrinogen to fibrin is triggered by thrombin, which cleaves fibrinopeptides A and B from alpha and beta chains, and thus exposes the N-terminal polymerization sites responsible for the formation of the soft clot. The soft clot is converted into the hard clot by factor XIIIA which catalyzes the epsilon-(gamma-glutamyl)lysine cross-linking between gamma chains (stronger) and between alpha chains (weaker) of different monomers.</text>
</comment>
<comment type="PTM">
    <text>Forms F13A-mediated cross-links between a glutamine and the epsilon-amino group of a lysine residue, forming fibronectin-fibrinogen heteropolymers.</text>
</comment>
<protein>
    <recommendedName>
        <fullName>Fibrinogen alpha-2 chain</fullName>
    </recommendedName>
    <component>
        <recommendedName>
            <fullName>Fibrinopeptide A</fullName>
        </recommendedName>
    </component>
    <component>
        <recommendedName>
            <fullName>Fibrinogen alpha-2 chain</fullName>
        </recommendedName>
    </component>
</protein>
<name>FIBA2_PETMA</name>
<proteinExistence type="evidence at transcript level"/>
<feature type="signal peptide" evidence="3">
    <location>
        <begin position="1"/>
        <end position="23"/>
    </location>
</feature>
<feature type="peptide" id="PRO_0000009051" description="Fibrinopeptide A" evidence="1">
    <location>
        <begin position="24"/>
        <end position="31"/>
    </location>
</feature>
<feature type="chain" id="PRO_0000009052" description="Fibrinogen alpha-2 chain">
    <location>
        <begin position="32"/>
        <end position="641"/>
    </location>
</feature>
<feature type="domain" description="Fibrinogen C-terminal" evidence="4">
    <location>
        <begin position="395"/>
        <end position="636"/>
    </location>
</feature>
<feature type="region of interest" description="Disordered" evidence="5">
    <location>
        <begin position="228"/>
        <end position="327"/>
    </location>
</feature>
<feature type="coiled-coil region" evidence="1">
    <location>
        <begin position="107"/>
        <end position="226"/>
    </location>
</feature>
<feature type="compositionally biased region" description="Basic and acidic residues" evidence="5">
    <location>
        <begin position="279"/>
        <end position="289"/>
    </location>
</feature>
<feature type="compositionally biased region" description="Low complexity" evidence="5">
    <location>
        <begin position="293"/>
        <end position="317"/>
    </location>
</feature>
<feature type="site" description="Cleavage; by thrombin; to release fibrinopeptide A">
    <location>
        <begin position="31"/>
        <end position="32"/>
    </location>
</feature>
<feature type="glycosylation site" description="N-linked (GlcNAc...) asparagine" evidence="3">
    <location>
        <position position="271"/>
    </location>
</feature>
<feature type="glycosylation site" description="N-linked (GlcNAc...) asparagine" evidence="3">
    <location>
        <position position="397"/>
    </location>
</feature>
<feature type="glycosylation site" description="N-linked (GlcNAc...) asparagine" evidence="3">
    <location>
        <position position="458"/>
    </location>
</feature>
<feature type="disulfide bond" description="Interchain (with alpha chain)" evidence="4">
    <location>
        <position position="45"/>
    </location>
</feature>
<feature type="disulfide bond" description="Interchain (with beta chain)" evidence="4">
    <location>
        <position position="54"/>
    </location>
</feature>
<feature type="disulfide bond" description="Interchain (with gamma chain)" evidence="4">
    <location>
        <position position="63"/>
    </location>
</feature>
<feature type="disulfide bond" description="Interchain (with beta chain)" evidence="4">
    <location>
        <position position="67"/>
    </location>
</feature>
<feature type="disulfide bond" description="Interchain (with gamma chain)" evidence="4">
    <location>
        <position position="179"/>
    </location>
</feature>
<feature type="disulfide bond" description="Interchain (with beta chain)" evidence="4">
    <location>
        <position position="183"/>
    </location>
</feature>
<feature type="disulfide bond" evidence="4">
    <location>
        <begin position="404"/>
        <end position="435"/>
    </location>
</feature>
<feature type="disulfide bond" evidence="4">
    <location>
        <begin position="571"/>
        <end position="584"/>
    </location>
</feature>
<keyword id="KW-0094">Blood coagulation</keyword>
<keyword id="KW-0175">Coiled coil</keyword>
<keyword id="KW-1015">Disulfide bond</keyword>
<keyword id="KW-0325">Glycoprotein</keyword>
<keyword id="KW-0356">Hemostasis</keyword>
<keyword id="KW-0677">Repeat</keyword>
<keyword id="KW-0964">Secreted</keyword>
<keyword id="KW-0732">Signal</keyword>
<reference key="1">
    <citation type="journal article" date="1992" name="Proc. Natl. Acad. Sci. U.S.A.">
        <title>cDNA sequence of a second fibrinogen alpha chain in lamprey: an archetypal version alignable with full-length beta and gamma chains.</title>
        <authorList>
            <person name="Pan Y."/>
            <person name="Doolittle R.F."/>
        </authorList>
    </citation>
    <scope>NUCLEOTIDE SEQUENCE [MRNA]</scope>
    <source>
        <tissue>Liver</tissue>
    </source>
</reference>
<evidence type="ECO:0000250" key="1"/>
<evidence type="ECO:0000250" key="2">
    <source>
        <dbReference type="UniProtKB" id="P02674"/>
    </source>
</evidence>
<evidence type="ECO:0000255" key="3"/>
<evidence type="ECO:0000255" key="4">
    <source>
        <dbReference type="PROSITE-ProRule" id="PRU00739"/>
    </source>
</evidence>
<evidence type="ECO:0000256" key="5">
    <source>
        <dbReference type="SAM" id="MobiDB-lite"/>
    </source>
</evidence>
<organism>
    <name type="scientific">Petromyzon marinus</name>
    <name type="common">Sea lamprey</name>
    <dbReference type="NCBI Taxonomy" id="7757"/>
    <lineage>
        <taxon>Eukaryota</taxon>
        <taxon>Metazoa</taxon>
        <taxon>Chordata</taxon>
        <taxon>Craniata</taxon>
        <taxon>Vertebrata</taxon>
        <taxon>Cyclostomata</taxon>
        <taxon>Hyperoartia</taxon>
        <taxon>Petromyzontiformes</taxon>
        <taxon>Petromyzontidae</taxon>
        <taxon>Petromyzon</taxon>
    </lineage>
</organism>
<dbReference type="EMBL" id="M84565">
    <property type="protein sequence ID" value="AAA73183.1"/>
    <property type="molecule type" value="mRNA"/>
</dbReference>
<dbReference type="EMBL" id="M84482">
    <property type="protein sequence ID" value="AAA49264.1"/>
    <property type="molecule type" value="mRNA"/>
</dbReference>
<dbReference type="PIR" id="A41932">
    <property type="entry name" value="A41932"/>
</dbReference>
<dbReference type="SMR" id="P33573"/>
<dbReference type="STRING" id="7757.ENSPMAP00000003059"/>
<dbReference type="Proteomes" id="UP001318040">
    <property type="component" value="Unplaced"/>
</dbReference>
<dbReference type="GO" id="GO:0005577">
    <property type="term" value="C:fibrinogen complex"/>
    <property type="evidence" value="ECO:0007669"/>
    <property type="project" value="InterPro"/>
</dbReference>
<dbReference type="GO" id="GO:0005201">
    <property type="term" value="F:extracellular matrix structural constituent"/>
    <property type="evidence" value="ECO:0007669"/>
    <property type="project" value="TreeGrafter"/>
</dbReference>
<dbReference type="GO" id="GO:0030674">
    <property type="term" value="F:protein-macromolecule adaptor activity"/>
    <property type="evidence" value="ECO:0007669"/>
    <property type="project" value="TreeGrafter"/>
</dbReference>
<dbReference type="GO" id="GO:0005102">
    <property type="term" value="F:signaling receptor binding"/>
    <property type="evidence" value="ECO:0007669"/>
    <property type="project" value="InterPro"/>
</dbReference>
<dbReference type="GO" id="GO:0072377">
    <property type="term" value="P:blood coagulation, common pathway"/>
    <property type="evidence" value="ECO:0007669"/>
    <property type="project" value="TreeGrafter"/>
</dbReference>
<dbReference type="GO" id="GO:0042730">
    <property type="term" value="P:fibrinolysis"/>
    <property type="evidence" value="ECO:0007669"/>
    <property type="project" value="TreeGrafter"/>
</dbReference>
<dbReference type="GO" id="GO:0070527">
    <property type="term" value="P:platelet aggregation"/>
    <property type="evidence" value="ECO:0007669"/>
    <property type="project" value="TreeGrafter"/>
</dbReference>
<dbReference type="GO" id="GO:0034116">
    <property type="term" value="P:positive regulation of heterotypic cell-cell adhesion"/>
    <property type="evidence" value="ECO:0007669"/>
    <property type="project" value="TreeGrafter"/>
</dbReference>
<dbReference type="GO" id="GO:0051258">
    <property type="term" value="P:protein polymerization"/>
    <property type="evidence" value="ECO:0007669"/>
    <property type="project" value="InterPro"/>
</dbReference>
<dbReference type="CDD" id="cd00087">
    <property type="entry name" value="FReD"/>
    <property type="match status" value="1"/>
</dbReference>
<dbReference type="Gene3D" id="1.20.5.50">
    <property type="match status" value="1"/>
</dbReference>
<dbReference type="Gene3D" id="3.90.215.10">
    <property type="entry name" value="Gamma Fibrinogen, chain A, domain 1"/>
    <property type="match status" value="1"/>
</dbReference>
<dbReference type="Gene3D" id="4.10.530.10">
    <property type="entry name" value="Gamma-fibrinogen Carboxyl Terminal Fragment, domain 2"/>
    <property type="match status" value="1"/>
</dbReference>
<dbReference type="InterPro" id="IPR037579">
    <property type="entry name" value="FIB_ANG-like"/>
</dbReference>
<dbReference type="InterPro" id="IPR036056">
    <property type="entry name" value="Fibrinogen-like_C"/>
</dbReference>
<dbReference type="InterPro" id="IPR014716">
    <property type="entry name" value="Fibrinogen_a/b/g_C_1"/>
</dbReference>
<dbReference type="InterPro" id="IPR002181">
    <property type="entry name" value="Fibrinogen_a/b/g_C_dom"/>
</dbReference>
<dbReference type="InterPro" id="IPR012290">
    <property type="entry name" value="Fibrinogen_a/b/g_coil_dom"/>
</dbReference>
<dbReference type="InterPro" id="IPR020837">
    <property type="entry name" value="Fibrinogen_CS"/>
</dbReference>
<dbReference type="NCBIfam" id="NF040941">
    <property type="entry name" value="GGGWT_bact"/>
    <property type="match status" value="1"/>
</dbReference>
<dbReference type="PANTHER" id="PTHR47221">
    <property type="entry name" value="FIBRINOGEN ALPHA CHAIN"/>
    <property type="match status" value="1"/>
</dbReference>
<dbReference type="PANTHER" id="PTHR47221:SF5">
    <property type="entry name" value="FIBRINOGEN C-TERMINAL DOMAIN-CONTAINING PROTEIN"/>
    <property type="match status" value="1"/>
</dbReference>
<dbReference type="Pfam" id="PF08702">
    <property type="entry name" value="Fib_alpha"/>
    <property type="match status" value="1"/>
</dbReference>
<dbReference type="Pfam" id="PF00147">
    <property type="entry name" value="Fibrinogen_C"/>
    <property type="match status" value="1"/>
</dbReference>
<dbReference type="SMART" id="SM00186">
    <property type="entry name" value="FBG"/>
    <property type="match status" value="1"/>
</dbReference>
<dbReference type="SMART" id="SM01212">
    <property type="entry name" value="Fib_alpha"/>
    <property type="match status" value="1"/>
</dbReference>
<dbReference type="SUPFAM" id="SSF56496">
    <property type="entry name" value="Fibrinogen C-terminal domain-like"/>
    <property type="match status" value="1"/>
</dbReference>
<dbReference type="SUPFAM" id="SSF58010">
    <property type="entry name" value="Fibrinogen coiled-coil and central regions"/>
    <property type="match status" value="1"/>
</dbReference>
<dbReference type="PROSITE" id="PS00514">
    <property type="entry name" value="FIBRINOGEN_C_1"/>
    <property type="match status" value="1"/>
</dbReference>
<dbReference type="PROSITE" id="PS51406">
    <property type="entry name" value="FIBRINOGEN_C_2"/>
    <property type="match status" value="1"/>
</dbReference>